<accession>P24584</accession>
<proteinExistence type="inferred from homology"/>
<protein>
    <recommendedName>
        <fullName>Polysialic acid transport protein KpsM</fullName>
    </recommendedName>
</protein>
<feature type="chain" id="PRO_0000182983" description="Polysialic acid transport protein KpsM">
    <location>
        <begin position="1"/>
        <end position="258"/>
    </location>
</feature>
<feature type="transmembrane region" description="Helical" evidence="1">
    <location>
        <begin position="33"/>
        <end position="53"/>
    </location>
</feature>
<feature type="transmembrane region" description="Helical" evidence="1">
    <location>
        <begin position="61"/>
        <end position="81"/>
    </location>
</feature>
<feature type="transmembrane region" description="Helical" evidence="1">
    <location>
        <begin position="110"/>
        <end position="130"/>
    </location>
</feature>
<feature type="transmembrane region" description="Helical" evidence="1">
    <location>
        <begin position="144"/>
        <end position="164"/>
    </location>
</feature>
<feature type="transmembrane region" description="Helical" evidence="1">
    <location>
        <begin position="175"/>
        <end position="195"/>
    </location>
</feature>
<feature type="transmembrane region" description="Helical" evidence="1">
    <location>
        <begin position="227"/>
        <end position="247"/>
    </location>
</feature>
<feature type="domain" description="ABC transmembrane type-2" evidence="2">
    <location>
        <begin position="30"/>
        <end position="251"/>
    </location>
</feature>
<reference key="1">
    <citation type="journal article" date="1990" name="Mol. Microbiol.">
        <title>Molecular analysis of the Escherichia coli K5 kps locus: identification and characterization of an inner-membrane capsular polysaccharide transport system.</title>
        <authorList>
            <person name="Smith A.N."/>
            <person name="Boulnois G.J."/>
            <person name="Roberts I.S."/>
        </authorList>
    </citation>
    <scope>NUCLEOTIDE SEQUENCE [GENOMIC DNA]</scope>
    <source>
        <strain>K5</strain>
    </source>
</reference>
<name>KPSM5_ECOLX</name>
<gene>
    <name type="primary">kpsM</name>
</gene>
<keyword id="KW-0997">Cell inner membrane</keyword>
<keyword id="KW-1003">Cell membrane</keyword>
<keyword id="KW-0472">Membrane</keyword>
<keyword id="KW-0812">Transmembrane</keyword>
<keyword id="KW-1133">Transmembrane helix</keyword>
<keyword id="KW-0813">Transport</keyword>
<comment type="function">
    <text>KpsM and KpsT constitute a system for the transport of polysialic acid across the cytoplasmic membrane.</text>
</comment>
<comment type="subcellular location">
    <subcellularLocation>
        <location evidence="3">Cell inner membrane</location>
        <topology evidence="3">Multi-pass membrane protein</topology>
    </subcellularLocation>
</comment>
<comment type="similarity">
    <text evidence="3">Belongs to the ABC-2 integral membrane protein family.</text>
</comment>
<evidence type="ECO:0000255" key="1"/>
<evidence type="ECO:0000255" key="2">
    <source>
        <dbReference type="PROSITE-ProRule" id="PRU00442"/>
    </source>
</evidence>
<evidence type="ECO:0000305" key="3"/>
<sequence length="258" mass="29562">MARSGFEVQKVTVEALFLREIRTRFGKFRLGYLWAILEPSAHLLILLGIFGYIMHRTMPDISFPVFLLNGLIPFFIFSSISNRSVGAIEANQGLFNYRPVKPIDTIIARALLETLIYVAVYILLMLIVWMAGEYFEITNFLQLVLTWSLLIILSCGIGLIFMVVGKTFPEMQKVLPILLKPLYFISCIMFPLHSIPKQYWSYLLWNPLVHVVELSREAVMPGYISEGVSLNYLAMFTLVTLFIGLALYRTREEAMLTS</sequence>
<dbReference type="EMBL" id="X53819">
    <property type="protein sequence ID" value="CAA37815.1"/>
    <property type="molecule type" value="Genomic_DNA"/>
</dbReference>
<dbReference type="PIR" id="S12236">
    <property type="entry name" value="S12236"/>
</dbReference>
<dbReference type="RefSeq" id="WP_000124291.1">
    <property type="nucleotide sequence ID" value="NZ_WTRA01000005.1"/>
</dbReference>
<dbReference type="SMR" id="P24584"/>
<dbReference type="TCDB" id="3.A.1.101.1">
    <property type="family name" value="the atp-binding cassette (abc) superfamily"/>
</dbReference>
<dbReference type="OMA" id="GIFQLHH"/>
<dbReference type="GO" id="GO:0043190">
    <property type="term" value="C:ATP-binding cassette (ABC) transporter complex"/>
    <property type="evidence" value="ECO:0007669"/>
    <property type="project" value="InterPro"/>
</dbReference>
<dbReference type="GO" id="GO:0140359">
    <property type="term" value="F:ABC-type transporter activity"/>
    <property type="evidence" value="ECO:0007669"/>
    <property type="project" value="InterPro"/>
</dbReference>
<dbReference type="GO" id="GO:0015920">
    <property type="term" value="P:lipopolysaccharide transport"/>
    <property type="evidence" value="ECO:0007669"/>
    <property type="project" value="TreeGrafter"/>
</dbReference>
<dbReference type="InterPro" id="IPR013525">
    <property type="entry name" value="ABC2_TM"/>
</dbReference>
<dbReference type="InterPro" id="IPR047817">
    <property type="entry name" value="ABC2_TM_bact-type"/>
</dbReference>
<dbReference type="InterPro" id="IPR000412">
    <property type="entry name" value="ABC_2_transport"/>
</dbReference>
<dbReference type="PANTHER" id="PTHR30413">
    <property type="entry name" value="INNER MEMBRANE TRANSPORT PERMEASE"/>
    <property type="match status" value="1"/>
</dbReference>
<dbReference type="PANTHER" id="PTHR30413:SF8">
    <property type="entry name" value="TRANSPORT PERMEASE PROTEIN"/>
    <property type="match status" value="1"/>
</dbReference>
<dbReference type="Pfam" id="PF01061">
    <property type="entry name" value="ABC2_membrane"/>
    <property type="match status" value="1"/>
</dbReference>
<dbReference type="PIRSF" id="PIRSF006648">
    <property type="entry name" value="DrrB"/>
    <property type="match status" value="1"/>
</dbReference>
<dbReference type="PRINTS" id="PR00164">
    <property type="entry name" value="ABC2TRNSPORT"/>
</dbReference>
<dbReference type="PROSITE" id="PS51012">
    <property type="entry name" value="ABC_TM2"/>
    <property type="match status" value="1"/>
</dbReference>
<organism>
    <name type="scientific">Escherichia coli</name>
    <dbReference type="NCBI Taxonomy" id="562"/>
    <lineage>
        <taxon>Bacteria</taxon>
        <taxon>Pseudomonadati</taxon>
        <taxon>Pseudomonadota</taxon>
        <taxon>Gammaproteobacteria</taxon>
        <taxon>Enterobacterales</taxon>
        <taxon>Enterobacteriaceae</taxon>
        <taxon>Escherichia</taxon>
    </lineage>
</organism>